<name>LADH_META3</name>
<gene>
    <name type="ordered locus">Maeo_1030</name>
</gene>
<comment type="function">
    <text evidence="1">Involved in F420 biosynthesis through the oxidation of lactaldehyde to lactate.</text>
</comment>
<comment type="catalytic activity">
    <reaction>
        <text>(S)-lactaldehyde + NAD(+) + H2O = (S)-lactate + NADH + 2 H(+)</text>
        <dbReference type="Rhea" id="RHEA:14277"/>
        <dbReference type="ChEBI" id="CHEBI:15377"/>
        <dbReference type="ChEBI" id="CHEBI:15378"/>
        <dbReference type="ChEBI" id="CHEBI:16651"/>
        <dbReference type="ChEBI" id="CHEBI:18041"/>
        <dbReference type="ChEBI" id="CHEBI:57540"/>
        <dbReference type="ChEBI" id="CHEBI:57945"/>
        <dbReference type="EC" id="1.2.1.22"/>
    </reaction>
</comment>
<comment type="pathway">
    <text>Cofactor biosynthesis; coenzyme F420 biosynthesis.</text>
</comment>
<comment type="subunit">
    <text evidence="1">Homotetramer.</text>
</comment>
<comment type="similarity">
    <text evidence="3">Belongs to the aldehyde dehydrogenase family.</text>
</comment>
<dbReference type="EC" id="1.2.1.22"/>
<dbReference type="EMBL" id="CP000743">
    <property type="protein sequence ID" value="ABR56608.1"/>
    <property type="molecule type" value="Genomic_DNA"/>
</dbReference>
<dbReference type="RefSeq" id="WP_011973740.1">
    <property type="nucleotide sequence ID" value="NC_009635.1"/>
</dbReference>
<dbReference type="SMR" id="A6UVT6"/>
<dbReference type="STRING" id="419665.Maeo_1030"/>
<dbReference type="GeneID" id="5327289"/>
<dbReference type="KEGG" id="mae:Maeo_1030"/>
<dbReference type="eggNOG" id="arCOG01252">
    <property type="taxonomic scope" value="Archaea"/>
</dbReference>
<dbReference type="HOGENOM" id="CLU_005391_1_0_2"/>
<dbReference type="OrthoDB" id="6342at2157"/>
<dbReference type="UniPathway" id="UPA00071"/>
<dbReference type="Proteomes" id="UP000001106">
    <property type="component" value="Chromosome"/>
</dbReference>
<dbReference type="GO" id="GO:0008911">
    <property type="term" value="F:lactaldehyde dehydrogenase (NAD+) activity"/>
    <property type="evidence" value="ECO:0007669"/>
    <property type="project" value="UniProtKB-EC"/>
</dbReference>
<dbReference type="CDD" id="cd07145">
    <property type="entry name" value="ALDH_LactADH_F420-Bios"/>
    <property type="match status" value="1"/>
</dbReference>
<dbReference type="FunFam" id="3.40.605.10:FF:000007">
    <property type="entry name" value="NAD/NADP-dependent betaine aldehyde dehydrogenase"/>
    <property type="match status" value="1"/>
</dbReference>
<dbReference type="Gene3D" id="3.40.605.10">
    <property type="entry name" value="Aldehyde Dehydrogenase, Chain A, domain 1"/>
    <property type="match status" value="1"/>
</dbReference>
<dbReference type="Gene3D" id="3.40.309.10">
    <property type="entry name" value="Aldehyde Dehydrogenase, Chain A, domain 2"/>
    <property type="match status" value="1"/>
</dbReference>
<dbReference type="InterPro" id="IPR016161">
    <property type="entry name" value="Ald_DH/histidinol_DH"/>
</dbReference>
<dbReference type="InterPro" id="IPR016163">
    <property type="entry name" value="Ald_DH_C"/>
</dbReference>
<dbReference type="InterPro" id="IPR029510">
    <property type="entry name" value="Ald_DH_CS_GLU"/>
</dbReference>
<dbReference type="InterPro" id="IPR016162">
    <property type="entry name" value="Ald_DH_N"/>
</dbReference>
<dbReference type="InterPro" id="IPR015590">
    <property type="entry name" value="Aldehyde_DH_dom"/>
</dbReference>
<dbReference type="InterPro" id="IPR051020">
    <property type="entry name" value="ALDH-related_metabolic_enz"/>
</dbReference>
<dbReference type="InterPro" id="IPR053404">
    <property type="entry name" value="Lactaldehyde_DH"/>
</dbReference>
<dbReference type="NCBIfam" id="NF040648">
    <property type="entry name" value="lactal_redase_Meth"/>
    <property type="match status" value="1"/>
</dbReference>
<dbReference type="PANTHER" id="PTHR42991">
    <property type="entry name" value="ALDEHYDE DEHYDROGENASE"/>
    <property type="match status" value="1"/>
</dbReference>
<dbReference type="PANTHER" id="PTHR42991:SF1">
    <property type="entry name" value="ALDEHYDE DEHYDROGENASE"/>
    <property type="match status" value="1"/>
</dbReference>
<dbReference type="Pfam" id="PF00171">
    <property type="entry name" value="Aldedh"/>
    <property type="match status" value="1"/>
</dbReference>
<dbReference type="SUPFAM" id="SSF53720">
    <property type="entry name" value="ALDH-like"/>
    <property type="match status" value="1"/>
</dbReference>
<dbReference type="PROSITE" id="PS00687">
    <property type="entry name" value="ALDEHYDE_DEHYDR_GLU"/>
    <property type="match status" value="1"/>
</dbReference>
<accession>A6UVT6</accession>
<proteinExistence type="inferred from homology"/>
<feature type="chain" id="PRO_0000342589" description="Lactaldehyde dehydrogenase">
    <location>
        <begin position="1"/>
        <end position="465"/>
    </location>
</feature>
<feature type="active site" evidence="2">
    <location>
        <position position="240"/>
    </location>
</feature>
<feature type="active site" evidence="2">
    <location>
        <position position="274"/>
    </location>
</feature>
<feature type="binding site" evidence="1">
    <location>
        <begin position="220"/>
        <end position="225"/>
    </location>
    <ligand>
        <name>NAD(+)</name>
        <dbReference type="ChEBI" id="CHEBI:57540"/>
    </ligand>
</feature>
<reference key="1">
    <citation type="submission" date="2007-06" db="EMBL/GenBank/DDBJ databases">
        <title>Complete sequence of Methanococcus aeolicus Nankai-3.</title>
        <authorList>
            <consortium name="US DOE Joint Genome Institute"/>
            <person name="Copeland A."/>
            <person name="Lucas S."/>
            <person name="Lapidus A."/>
            <person name="Barry K."/>
            <person name="Glavina del Rio T."/>
            <person name="Dalin E."/>
            <person name="Tice H."/>
            <person name="Pitluck S."/>
            <person name="Chain P."/>
            <person name="Malfatti S."/>
            <person name="Shin M."/>
            <person name="Vergez L."/>
            <person name="Schmutz J."/>
            <person name="Larimer F."/>
            <person name="Land M."/>
            <person name="Hauser L."/>
            <person name="Kyrpides N."/>
            <person name="Lykidis A."/>
            <person name="Sieprawska-Lupa M."/>
            <person name="Whitman W.B."/>
            <person name="Richardson P."/>
        </authorList>
    </citation>
    <scope>NUCLEOTIDE SEQUENCE [LARGE SCALE GENOMIC DNA]</scope>
    <source>
        <strain>ATCC BAA-1280 / DSM 17508 / OCM 812 / Nankai-3</strain>
    </source>
</reference>
<organism>
    <name type="scientific">Methanococcus aeolicus (strain ATCC BAA-1280 / DSM 17508 / OCM 812 / Nankai-3)</name>
    <dbReference type="NCBI Taxonomy" id="419665"/>
    <lineage>
        <taxon>Archaea</taxon>
        <taxon>Methanobacteriati</taxon>
        <taxon>Methanobacteriota</taxon>
        <taxon>Methanomada group</taxon>
        <taxon>Methanococci</taxon>
        <taxon>Methanococcales</taxon>
        <taxon>Methanococcaceae</taxon>
        <taxon>Methanococcus</taxon>
    </lineage>
</organism>
<evidence type="ECO:0000250" key="1"/>
<evidence type="ECO:0000255" key="2">
    <source>
        <dbReference type="PROSITE-ProRule" id="PRU10007"/>
    </source>
</evidence>
<evidence type="ECO:0000305" key="3"/>
<keyword id="KW-0520">NAD</keyword>
<keyword id="KW-0560">Oxidoreductase</keyword>
<protein>
    <recommendedName>
        <fullName>Lactaldehyde dehydrogenase</fullName>
        <ecNumber>1.2.1.22</ecNumber>
    </recommendedName>
</protein>
<sequence>MFINGEWINRKDIEVKNPYNNEIIGYIPSLSRNETKEAIKIAEEHKSTMKNLSPTIRYNILMKIASELSKNKRELAKLITIDVGKPIKQSIIEVDRTITTFKFSAFYSRELRGETIPFDDGMVITKREPVGLVGAITPFNFPLNLFAHKIAPAIAMGNSIVAHPSSKAPMITIELTKIIEKVLKSKKIPLGVFNLLTGEGHIVGDEIVKNNKINKLSFTGSVEVGESITKKAGFKKITLELGGNNPMIILKDANINKAVESCMSGKFLNSGQVCISVGRVLIEQEVADEFINKIVEKVKKLKIGNPLDEDTNISSLISLDSAERVEKLINKSIGQGGKLICGGKRENSIIYPTILEITADNILANIEIFAPVLPIIRVNDMNEALNQANNSNYGLHSGVFTQDINKALYFADNLEYGGVLINNSPTFRIDNMPFGGIKHSGLGREGIKYAIDEMSEIKTIIVNTK</sequence>